<gene>
    <name evidence="1" type="primary">nuoD</name>
    <name type="ordered locus">BRADO4183</name>
</gene>
<comment type="function">
    <text evidence="1">NDH-1 shuttles electrons from NADH, via FMN and iron-sulfur (Fe-S) centers, to quinones in the respiratory chain. The immediate electron acceptor for the enzyme in this species is believed to be ubiquinone. Couples the redox reaction to proton translocation (for every two electrons transferred, four hydrogen ions are translocated across the cytoplasmic membrane), and thus conserves the redox energy in a proton gradient.</text>
</comment>
<comment type="catalytic activity">
    <reaction evidence="1">
        <text>a quinone + NADH + 5 H(+)(in) = a quinol + NAD(+) + 4 H(+)(out)</text>
        <dbReference type="Rhea" id="RHEA:57888"/>
        <dbReference type="ChEBI" id="CHEBI:15378"/>
        <dbReference type="ChEBI" id="CHEBI:24646"/>
        <dbReference type="ChEBI" id="CHEBI:57540"/>
        <dbReference type="ChEBI" id="CHEBI:57945"/>
        <dbReference type="ChEBI" id="CHEBI:132124"/>
    </reaction>
</comment>
<comment type="subunit">
    <text evidence="1">NDH-1 is composed of 14 different subunits. Subunits NuoB, C, D, E, F, and G constitute the peripheral sector of the complex.</text>
</comment>
<comment type="subcellular location">
    <subcellularLocation>
        <location evidence="1">Cell inner membrane</location>
        <topology evidence="1">Peripheral membrane protein</topology>
        <orientation evidence="1">Cytoplasmic side</orientation>
    </subcellularLocation>
</comment>
<comment type="similarity">
    <text evidence="1">Belongs to the complex I 49 kDa subunit family.</text>
</comment>
<dbReference type="EC" id="7.1.1.-" evidence="1"/>
<dbReference type="EMBL" id="CU234118">
    <property type="protein sequence ID" value="CAL77935.1"/>
    <property type="molecule type" value="Genomic_DNA"/>
</dbReference>
<dbReference type="RefSeq" id="WP_011927061.1">
    <property type="nucleotide sequence ID" value="NC_009445.1"/>
</dbReference>
<dbReference type="SMR" id="A4YVK9"/>
<dbReference type="STRING" id="114615.BRADO4183"/>
<dbReference type="KEGG" id="bra:BRADO4183"/>
<dbReference type="eggNOG" id="COG0649">
    <property type="taxonomic scope" value="Bacteria"/>
</dbReference>
<dbReference type="HOGENOM" id="CLU_015134_1_1_5"/>
<dbReference type="OrthoDB" id="9801496at2"/>
<dbReference type="Proteomes" id="UP000001994">
    <property type="component" value="Chromosome"/>
</dbReference>
<dbReference type="GO" id="GO:0005886">
    <property type="term" value="C:plasma membrane"/>
    <property type="evidence" value="ECO:0007669"/>
    <property type="project" value="UniProtKB-SubCell"/>
</dbReference>
<dbReference type="GO" id="GO:0051287">
    <property type="term" value="F:NAD binding"/>
    <property type="evidence" value="ECO:0007669"/>
    <property type="project" value="InterPro"/>
</dbReference>
<dbReference type="GO" id="GO:0050136">
    <property type="term" value="F:NADH:ubiquinone reductase (non-electrogenic) activity"/>
    <property type="evidence" value="ECO:0007669"/>
    <property type="project" value="UniProtKB-UniRule"/>
</dbReference>
<dbReference type="GO" id="GO:0048038">
    <property type="term" value="F:quinone binding"/>
    <property type="evidence" value="ECO:0007669"/>
    <property type="project" value="UniProtKB-KW"/>
</dbReference>
<dbReference type="FunFam" id="1.10.645.10:FF:000005">
    <property type="entry name" value="NADH-quinone oxidoreductase subunit D"/>
    <property type="match status" value="1"/>
</dbReference>
<dbReference type="Gene3D" id="1.10.645.10">
    <property type="entry name" value="Cytochrome-c3 Hydrogenase, chain B"/>
    <property type="match status" value="1"/>
</dbReference>
<dbReference type="HAMAP" id="MF_01358">
    <property type="entry name" value="NDH1_NuoD"/>
    <property type="match status" value="1"/>
</dbReference>
<dbReference type="InterPro" id="IPR001135">
    <property type="entry name" value="NADH_Q_OxRdtase_suD"/>
</dbReference>
<dbReference type="InterPro" id="IPR014029">
    <property type="entry name" value="NADH_UbQ_OxRdtase_49kDa_CS"/>
</dbReference>
<dbReference type="InterPro" id="IPR022885">
    <property type="entry name" value="NDH1_su_D/H"/>
</dbReference>
<dbReference type="InterPro" id="IPR029014">
    <property type="entry name" value="NiFe-Hase_large"/>
</dbReference>
<dbReference type="NCBIfam" id="TIGR01962">
    <property type="entry name" value="NuoD"/>
    <property type="match status" value="1"/>
</dbReference>
<dbReference type="NCBIfam" id="NF004739">
    <property type="entry name" value="PRK06075.1"/>
    <property type="match status" value="1"/>
</dbReference>
<dbReference type="PANTHER" id="PTHR11993:SF10">
    <property type="entry name" value="NADH DEHYDROGENASE [UBIQUINONE] IRON-SULFUR PROTEIN 2, MITOCHONDRIAL"/>
    <property type="match status" value="1"/>
</dbReference>
<dbReference type="PANTHER" id="PTHR11993">
    <property type="entry name" value="NADH-UBIQUINONE OXIDOREDUCTASE 49 KDA SUBUNIT"/>
    <property type="match status" value="1"/>
</dbReference>
<dbReference type="Pfam" id="PF00346">
    <property type="entry name" value="Complex1_49kDa"/>
    <property type="match status" value="1"/>
</dbReference>
<dbReference type="SUPFAM" id="SSF56762">
    <property type="entry name" value="HydB/Nqo4-like"/>
    <property type="match status" value="1"/>
</dbReference>
<dbReference type="PROSITE" id="PS00535">
    <property type="entry name" value="COMPLEX1_49K"/>
    <property type="match status" value="1"/>
</dbReference>
<accession>A4YVK9</accession>
<proteinExistence type="inferred from homology"/>
<evidence type="ECO:0000255" key="1">
    <source>
        <dbReference type="HAMAP-Rule" id="MF_01358"/>
    </source>
</evidence>
<name>NUOD_BRASO</name>
<reference key="1">
    <citation type="journal article" date="2007" name="Science">
        <title>Legumes symbioses: absence of nod genes in photosynthetic bradyrhizobia.</title>
        <authorList>
            <person name="Giraud E."/>
            <person name="Moulin L."/>
            <person name="Vallenet D."/>
            <person name="Barbe V."/>
            <person name="Cytryn E."/>
            <person name="Avarre J.-C."/>
            <person name="Jaubert M."/>
            <person name="Simon D."/>
            <person name="Cartieaux F."/>
            <person name="Prin Y."/>
            <person name="Bena G."/>
            <person name="Hannibal L."/>
            <person name="Fardoux J."/>
            <person name="Kojadinovic M."/>
            <person name="Vuillet L."/>
            <person name="Lajus A."/>
            <person name="Cruveiller S."/>
            <person name="Rouy Z."/>
            <person name="Mangenot S."/>
            <person name="Segurens B."/>
            <person name="Dossat C."/>
            <person name="Franck W.L."/>
            <person name="Chang W.-S."/>
            <person name="Saunders E."/>
            <person name="Bruce D."/>
            <person name="Richardson P."/>
            <person name="Normand P."/>
            <person name="Dreyfus B."/>
            <person name="Pignol D."/>
            <person name="Stacey G."/>
            <person name="Emerich D."/>
            <person name="Vermeglio A."/>
            <person name="Medigue C."/>
            <person name="Sadowsky M."/>
        </authorList>
    </citation>
    <scope>NUCLEOTIDE SEQUENCE [LARGE SCALE GENOMIC DNA]</scope>
    <source>
        <strain>ORS 278</strain>
    </source>
</reference>
<keyword id="KW-0997">Cell inner membrane</keyword>
<keyword id="KW-1003">Cell membrane</keyword>
<keyword id="KW-0472">Membrane</keyword>
<keyword id="KW-0520">NAD</keyword>
<keyword id="KW-0874">Quinone</keyword>
<keyword id="KW-1185">Reference proteome</keyword>
<keyword id="KW-1278">Translocase</keyword>
<keyword id="KW-0813">Transport</keyword>
<keyword id="KW-0830">Ubiquinone</keyword>
<sequence length="398" mass="44947">MNEQSPALRNFTINFGPQHPAAHGVLRLVLELDGEVVERVDPHIGLLHRGTEKLIETKTYLQAMPYFDRLDYVAPMNQEHAFCLAAERLLGIEVPRRGQLIRVLYSEIGRLLSHLLNVTTQAMDVGALTPPLWGFEEREKLMVFYERASGSRMHANYFRIGGVHQDLPPKLVDDIDAFCDPFLKVVDDLDQLLTGNRIFKQRNVDIGVVTLKQAWEWGFSGVMVRGSGAAWDLRKSQPYDVYAEMEFDIPIGKNGDCYDRYLIRMEEMRQSVRIMKQCIAKLRAPDGQGPVLITDNKIAPPRRGEMKRSMEALIHHFKLYTEGVHVPAGEIYAAVEAPKGEFGVYLVADGTNKPYKCKIRAPGFAHLQAMDFLCRGHLLADVSAILGSLDIVFGEVDR</sequence>
<organism>
    <name type="scientific">Bradyrhizobium sp. (strain ORS 278)</name>
    <dbReference type="NCBI Taxonomy" id="114615"/>
    <lineage>
        <taxon>Bacteria</taxon>
        <taxon>Pseudomonadati</taxon>
        <taxon>Pseudomonadota</taxon>
        <taxon>Alphaproteobacteria</taxon>
        <taxon>Hyphomicrobiales</taxon>
        <taxon>Nitrobacteraceae</taxon>
        <taxon>Bradyrhizobium</taxon>
    </lineage>
</organism>
<protein>
    <recommendedName>
        <fullName evidence="1">NADH-quinone oxidoreductase subunit D</fullName>
        <ecNumber evidence="1">7.1.1.-</ecNumber>
    </recommendedName>
    <alternativeName>
        <fullName evidence="1">NADH dehydrogenase I subunit D</fullName>
    </alternativeName>
    <alternativeName>
        <fullName evidence="1">NDH-1 subunit D</fullName>
    </alternativeName>
</protein>
<feature type="chain" id="PRO_0000357781" description="NADH-quinone oxidoreductase subunit D">
    <location>
        <begin position="1"/>
        <end position="398"/>
    </location>
</feature>